<gene>
    <name type="primary">fliE</name>
    <name type="ordered locus">PA1100</name>
</gene>
<accession>Q51462</accession>
<proteinExistence type="inferred from homology"/>
<keyword id="KW-0975">Bacterial flagellum</keyword>
<keyword id="KW-1185">Reference proteome</keyword>
<evidence type="ECO:0000250" key="1"/>
<evidence type="ECO:0000305" key="2"/>
<name>FLIE_PSEAE</name>
<sequence length="109" mass="11880">MSQGVEFNRLMLEMRSMQMEAMAKAKPVQAPAEVGAPSFSEMLSQAVDKVNETQQASTAMANAFEVGQSGVDLTDVMIASQKASVSFQAMTQVRNKLVQAYQDIMQMPV</sequence>
<organism>
    <name type="scientific">Pseudomonas aeruginosa (strain ATCC 15692 / DSM 22644 / CIP 104116 / JCM 14847 / LMG 12228 / 1C / PRS 101 / PAO1)</name>
    <dbReference type="NCBI Taxonomy" id="208964"/>
    <lineage>
        <taxon>Bacteria</taxon>
        <taxon>Pseudomonadati</taxon>
        <taxon>Pseudomonadota</taxon>
        <taxon>Gammaproteobacteria</taxon>
        <taxon>Pseudomonadales</taxon>
        <taxon>Pseudomonadaceae</taxon>
        <taxon>Pseudomonas</taxon>
    </lineage>
</organism>
<protein>
    <recommendedName>
        <fullName>Flagellar hook-basal body complex protein FliE</fullName>
    </recommendedName>
</protein>
<reference key="1">
    <citation type="journal article" date="1996" name="Infect. Immun.">
        <title>Cloning and characterization of Pseudomonas aeruginosa fliF, necessary for flagellar assembly and bacterial adherence to mucin.</title>
        <authorList>
            <person name="Arora S.K."/>
            <person name="Ritchings B.W."/>
            <person name="Almira E.C."/>
            <person name="Lory S."/>
            <person name="Ramphal R."/>
        </authorList>
    </citation>
    <scope>NUCLEOTIDE SEQUENCE [GENOMIC DNA]</scope>
    <source>
        <strain>PAK</strain>
    </source>
</reference>
<reference key="2">
    <citation type="journal article" date="2000" name="Nature">
        <title>Complete genome sequence of Pseudomonas aeruginosa PAO1, an opportunistic pathogen.</title>
        <authorList>
            <person name="Stover C.K."/>
            <person name="Pham X.-Q.T."/>
            <person name="Erwin A.L."/>
            <person name="Mizoguchi S.D."/>
            <person name="Warrener P."/>
            <person name="Hickey M.J."/>
            <person name="Brinkman F.S.L."/>
            <person name="Hufnagle W.O."/>
            <person name="Kowalik D.J."/>
            <person name="Lagrou M."/>
            <person name="Garber R.L."/>
            <person name="Goltry L."/>
            <person name="Tolentino E."/>
            <person name="Westbrock-Wadman S."/>
            <person name="Yuan Y."/>
            <person name="Brody L.L."/>
            <person name="Coulter S.N."/>
            <person name="Folger K.R."/>
            <person name="Kas A."/>
            <person name="Larbig K."/>
            <person name="Lim R.M."/>
            <person name="Smith K.A."/>
            <person name="Spencer D.H."/>
            <person name="Wong G.K.-S."/>
            <person name="Wu Z."/>
            <person name="Paulsen I.T."/>
            <person name="Reizer J."/>
            <person name="Saier M.H. Jr."/>
            <person name="Hancock R.E.W."/>
            <person name="Lory S."/>
            <person name="Olson M.V."/>
        </authorList>
    </citation>
    <scope>NUCLEOTIDE SEQUENCE [LARGE SCALE GENOMIC DNA]</scope>
    <source>
        <strain>ATCC 15692 / DSM 22644 / CIP 104116 / JCM 14847 / LMG 12228 / 1C / PRS 101 / PAO1</strain>
    </source>
</reference>
<comment type="subcellular location">
    <subcellularLocation>
        <location evidence="1">Bacterial flagellum basal body</location>
    </subcellularLocation>
</comment>
<comment type="similarity">
    <text evidence="2">Belongs to the FliE family.</text>
</comment>
<feature type="chain" id="PRO_0000105555" description="Flagellar hook-basal body complex protein FliE">
    <location>
        <begin position="1"/>
        <end position="109"/>
    </location>
</feature>
<feature type="sequence conflict" description="In Ref. 1; AAB06800." evidence="2" ref="1">
    <original>V</original>
    <variation>A</variation>
    <location>
        <position position="28"/>
    </location>
</feature>
<feature type="sequence conflict" description="In Ref. 1; AAB06800." evidence="2" ref="1">
    <original>V</original>
    <variation>A</variation>
    <location>
        <position position="34"/>
    </location>
</feature>
<dbReference type="EMBL" id="L43507">
    <property type="protein sequence ID" value="AAB06800.1"/>
    <property type="molecule type" value="Genomic_DNA"/>
</dbReference>
<dbReference type="EMBL" id="AE004091">
    <property type="protein sequence ID" value="AAG04489.1"/>
    <property type="molecule type" value="Genomic_DNA"/>
</dbReference>
<dbReference type="PIR" id="E83508">
    <property type="entry name" value="E83508"/>
</dbReference>
<dbReference type="RefSeq" id="NP_249791.1">
    <property type="nucleotide sequence ID" value="NC_002516.2"/>
</dbReference>
<dbReference type="RefSeq" id="WP_003086454.1">
    <property type="nucleotide sequence ID" value="NZ_QZGE01000006.1"/>
</dbReference>
<dbReference type="SMR" id="Q51462"/>
<dbReference type="FunCoup" id="Q51462">
    <property type="interactions" value="63"/>
</dbReference>
<dbReference type="STRING" id="208964.PA1100"/>
<dbReference type="PaxDb" id="208964-PA1100"/>
<dbReference type="DNASU" id="882031"/>
<dbReference type="GeneID" id="882031"/>
<dbReference type="KEGG" id="pae:PA1100"/>
<dbReference type="PATRIC" id="fig|208964.12.peg.1139"/>
<dbReference type="PseudoCAP" id="PA1100"/>
<dbReference type="HOGENOM" id="CLU_147249_0_0_6"/>
<dbReference type="InParanoid" id="Q51462"/>
<dbReference type="OrthoDB" id="8909229at2"/>
<dbReference type="PhylomeDB" id="Q51462"/>
<dbReference type="BioCyc" id="PAER208964:G1FZ6-1123-MONOMER"/>
<dbReference type="Proteomes" id="UP000002438">
    <property type="component" value="Chromosome"/>
</dbReference>
<dbReference type="GO" id="GO:0009425">
    <property type="term" value="C:bacterial-type flagellum basal body"/>
    <property type="evidence" value="ECO:0007669"/>
    <property type="project" value="UniProtKB-SubCell"/>
</dbReference>
<dbReference type="GO" id="GO:0003774">
    <property type="term" value="F:cytoskeletal motor activity"/>
    <property type="evidence" value="ECO:0007669"/>
    <property type="project" value="InterPro"/>
</dbReference>
<dbReference type="GO" id="GO:0005198">
    <property type="term" value="F:structural molecule activity"/>
    <property type="evidence" value="ECO:0007669"/>
    <property type="project" value="InterPro"/>
</dbReference>
<dbReference type="GO" id="GO:0044780">
    <property type="term" value="P:bacterial-type flagellum assembly"/>
    <property type="evidence" value="ECO:0000318"/>
    <property type="project" value="GO_Central"/>
</dbReference>
<dbReference type="GO" id="GO:0071973">
    <property type="term" value="P:bacterial-type flagellum-dependent cell motility"/>
    <property type="evidence" value="ECO:0007669"/>
    <property type="project" value="InterPro"/>
</dbReference>
<dbReference type="HAMAP" id="MF_00724">
    <property type="entry name" value="FliE"/>
    <property type="match status" value="1"/>
</dbReference>
<dbReference type="InterPro" id="IPR001624">
    <property type="entry name" value="FliE"/>
</dbReference>
<dbReference type="NCBIfam" id="TIGR00205">
    <property type="entry name" value="fliE"/>
    <property type="match status" value="1"/>
</dbReference>
<dbReference type="PANTHER" id="PTHR34653">
    <property type="match status" value="1"/>
</dbReference>
<dbReference type="PANTHER" id="PTHR34653:SF1">
    <property type="entry name" value="FLAGELLAR HOOK-BASAL BODY COMPLEX PROTEIN FLIE"/>
    <property type="match status" value="1"/>
</dbReference>
<dbReference type="Pfam" id="PF02049">
    <property type="entry name" value="FliE"/>
    <property type="match status" value="1"/>
</dbReference>
<dbReference type="PRINTS" id="PR01006">
    <property type="entry name" value="FLGHOOKFLIE"/>
</dbReference>